<gene>
    <name evidence="5" type="primary">MTRNR2L11</name>
</gene>
<feature type="chain" id="PRO_0000431294" description="Humanin-like 11">
    <location>
        <begin position="1"/>
        <end position="24"/>
    </location>
</feature>
<sequence length="24" mass="2737">MATRGFSCLLLVISEIDLSVKRWV</sequence>
<keyword id="KW-0963">Cytoplasm</keyword>
<keyword id="KW-1185">Reference proteome</keyword>
<keyword id="KW-0964">Secreted</keyword>
<evidence type="ECO:0000250" key="1">
    <source>
        <dbReference type="UniProtKB" id="Q8IVG9"/>
    </source>
</evidence>
<evidence type="ECO:0000303" key="2">
    <source>
    </source>
</evidence>
<evidence type="ECO:0000305" key="3"/>
<evidence type="ECO:0000305" key="4">
    <source>
    </source>
</evidence>
<evidence type="ECO:0000312" key="5">
    <source>
        <dbReference type="HGNC" id="HGNC:37168"/>
    </source>
</evidence>
<name>HMN11_HUMAN</name>
<proteinExistence type="inferred from homology"/>
<organism>
    <name type="scientific">Homo sapiens</name>
    <name type="common">Human</name>
    <dbReference type="NCBI Taxonomy" id="9606"/>
    <lineage>
        <taxon>Eukaryota</taxon>
        <taxon>Metazoa</taxon>
        <taxon>Chordata</taxon>
        <taxon>Craniata</taxon>
        <taxon>Vertebrata</taxon>
        <taxon>Euteleostomi</taxon>
        <taxon>Mammalia</taxon>
        <taxon>Eutheria</taxon>
        <taxon>Euarchontoglires</taxon>
        <taxon>Primates</taxon>
        <taxon>Haplorrhini</taxon>
        <taxon>Catarrhini</taxon>
        <taxon>Hominidae</taxon>
        <taxon>Homo</taxon>
    </lineage>
</organism>
<protein>
    <recommendedName>
        <fullName evidence="3">Humanin-like 11</fullName>
        <shortName evidence="2">HN11</shortName>
    </recommendedName>
    <alternativeName>
        <fullName evidence="5">MT-RNR2-like protein 11</fullName>
    </alternativeName>
</protein>
<comment type="function">
    <text evidence="1">Plays a role as a neuroprotective and antiapoptotic factor.</text>
</comment>
<comment type="subcellular location">
    <subcellularLocation>
        <location evidence="1">Secreted</location>
    </subcellularLocation>
    <subcellularLocation>
        <location evidence="1">Cytoplasm</location>
    </subcellularLocation>
</comment>
<comment type="similarity">
    <text evidence="3">Belongs to the humanin family.</text>
</comment>
<comment type="caution">
    <text evidence="4">The humanin peptide has been shown to be biologically active but is the product of a mitochondrial gene, MT-RNR2. The mechanisms allowing the production and the secretion of humanin from the mitochondrial gene remaining unclear, the possibility exist that the physiologically active humanin peptide is encoded by one of the related genes present in the nuclear genome including the one described here (PubMed:19477263).</text>
</comment>
<accession>S4R3Y5</accession>
<dbReference type="EMBL" id="AL590396">
    <property type="status" value="NOT_ANNOTATED_CDS"/>
    <property type="molecule type" value="Genomic_DNA"/>
</dbReference>
<dbReference type="STRING" id="9606.ENSP00000474861"/>
<dbReference type="BioMuta" id="MTRNR2L11"/>
<dbReference type="PaxDb" id="9606-ENSP00000474861"/>
<dbReference type="UCSC" id="uc057qqv.1">
    <property type="organism name" value="human"/>
</dbReference>
<dbReference type="AGR" id="HGNC:37168"/>
<dbReference type="GeneCards" id="MTRNR2L11"/>
<dbReference type="HGNC" id="HGNC:37168">
    <property type="gene designation" value="MTRNR2L11"/>
</dbReference>
<dbReference type="neXtProt" id="NX_S4R3Y5"/>
<dbReference type="VEuPathDB" id="HostDB:ENSG00000270188"/>
<dbReference type="HOGENOM" id="CLU_221584_0_0_1"/>
<dbReference type="InParanoid" id="S4R3Y5"/>
<dbReference type="PAN-GO" id="S4R3Y5">
    <property type="GO annotations" value="2 GO annotations based on evolutionary models"/>
</dbReference>
<dbReference type="PhylomeDB" id="S4R3Y5"/>
<dbReference type="PathwayCommons" id="S4R3Y5"/>
<dbReference type="ChiTaRS" id="MTRNR2L11">
    <property type="organism name" value="human"/>
</dbReference>
<dbReference type="Pharos" id="S4R3Y5">
    <property type="development level" value="Tdark"/>
</dbReference>
<dbReference type="PRO" id="PR:S4R3Y5"/>
<dbReference type="Proteomes" id="UP000005640">
    <property type="component" value="Chromosome 1"/>
</dbReference>
<dbReference type="Bgee" id="ENSG00000270188">
    <property type="expression patterns" value="Expressed in male germ line stem cell (sensu Vertebrata) in testis and 56 other cell types or tissues"/>
</dbReference>
<dbReference type="GO" id="GO:0005737">
    <property type="term" value="C:cytoplasm"/>
    <property type="evidence" value="ECO:0007669"/>
    <property type="project" value="UniProtKB-SubCell"/>
</dbReference>
<dbReference type="GO" id="GO:0005576">
    <property type="term" value="C:extracellular region"/>
    <property type="evidence" value="ECO:0007669"/>
    <property type="project" value="UniProtKB-SubCell"/>
</dbReference>
<dbReference type="GO" id="GO:0048019">
    <property type="term" value="F:receptor antagonist activity"/>
    <property type="evidence" value="ECO:0000318"/>
    <property type="project" value="GO_Central"/>
</dbReference>
<dbReference type="GO" id="GO:1900118">
    <property type="term" value="P:negative regulation of execution phase of apoptosis"/>
    <property type="evidence" value="ECO:0000318"/>
    <property type="project" value="GO_Central"/>
</dbReference>
<dbReference type="CDD" id="cd20245">
    <property type="entry name" value="humanin"/>
    <property type="match status" value="1"/>
</dbReference>
<dbReference type="InterPro" id="IPR028139">
    <property type="entry name" value="Humanin"/>
</dbReference>
<dbReference type="PANTHER" id="PTHR33895:SF16">
    <property type="entry name" value="HUMANIN-LIKE 11"/>
    <property type="match status" value="1"/>
</dbReference>
<dbReference type="PANTHER" id="PTHR33895">
    <property type="entry name" value="HUMANIN-LIKE 4"/>
    <property type="match status" value="1"/>
</dbReference>
<dbReference type="Pfam" id="PF15040">
    <property type="entry name" value="Humanin"/>
    <property type="match status" value="1"/>
</dbReference>
<reference key="1">
    <citation type="journal article" date="2006" name="Nature">
        <title>The DNA sequence and biological annotation of human chromosome 1.</title>
        <authorList>
            <person name="Gregory S.G."/>
            <person name="Barlow K.F."/>
            <person name="McLay K.E."/>
            <person name="Kaul R."/>
            <person name="Swarbreck D."/>
            <person name="Dunham A."/>
            <person name="Scott C.E."/>
            <person name="Howe K.L."/>
            <person name="Woodfine K."/>
            <person name="Spencer C.C.A."/>
            <person name="Jones M.C."/>
            <person name="Gillson C."/>
            <person name="Searle S."/>
            <person name="Zhou Y."/>
            <person name="Kokocinski F."/>
            <person name="McDonald L."/>
            <person name="Evans R."/>
            <person name="Phillips K."/>
            <person name="Atkinson A."/>
            <person name="Cooper R."/>
            <person name="Jones C."/>
            <person name="Hall R.E."/>
            <person name="Andrews T.D."/>
            <person name="Lloyd C."/>
            <person name="Ainscough R."/>
            <person name="Almeida J.P."/>
            <person name="Ambrose K.D."/>
            <person name="Anderson F."/>
            <person name="Andrew R.W."/>
            <person name="Ashwell R.I.S."/>
            <person name="Aubin K."/>
            <person name="Babbage A.K."/>
            <person name="Bagguley C.L."/>
            <person name="Bailey J."/>
            <person name="Beasley H."/>
            <person name="Bethel G."/>
            <person name="Bird C.P."/>
            <person name="Bray-Allen S."/>
            <person name="Brown J.Y."/>
            <person name="Brown A.J."/>
            <person name="Buckley D."/>
            <person name="Burton J."/>
            <person name="Bye J."/>
            <person name="Carder C."/>
            <person name="Chapman J.C."/>
            <person name="Clark S.Y."/>
            <person name="Clarke G."/>
            <person name="Clee C."/>
            <person name="Cobley V."/>
            <person name="Collier R.E."/>
            <person name="Corby N."/>
            <person name="Coville G.J."/>
            <person name="Davies J."/>
            <person name="Deadman R."/>
            <person name="Dunn M."/>
            <person name="Earthrowl M."/>
            <person name="Ellington A.G."/>
            <person name="Errington H."/>
            <person name="Frankish A."/>
            <person name="Frankland J."/>
            <person name="French L."/>
            <person name="Garner P."/>
            <person name="Garnett J."/>
            <person name="Gay L."/>
            <person name="Ghori M.R.J."/>
            <person name="Gibson R."/>
            <person name="Gilby L.M."/>
            <person name="Gillett W."/>
            <person name="Glithero R.J."/>
            <person name="Grafham D.V."/>
            <person name="Griffiths C."/>
            <person name="Griffiths-Jones S."/>
            <person name="Grocock R."/>
            <person name="Hammond S."/>
            <person name="Harrison E.S.I."/>
            <person name="Hart E."/>
            <person name="Haugen E."/>
            <person name="Heath P.D."/>
            <person name="Holmes S."/>
            <person name="Holt K."/>
            <person name="Howden P.J."/>
            <person name="Hunt A.R."/>
            <person name="Hunt S.E."/>
            <person name="Hunter G."/>
            <person name="Isherwood J."/>
            <person name="James R."/>
            <person name="Johnson C."/>
            <person name="Johnson D."/>
            <person name="Joy A."/>
            <person name="Kay M."/>
            <person name="Kershaw J.K."/>
            <person name="Kibukawa M."/>
            <person name="Kimberley A.M."/>
            <person name="King A."/>
            <person name="Knights A.J."/>
            <person name="Lad H."/>
            <person name="Laird G."/>
            <person name="Lawlor S."/>
            <person name="Leongamornlert D.A."/>
            <person name="Lloyd D.M."/>
            <person name="Loveland J."/>
            <person name="Lovell J."/>
            <person name="Lush M.J."/>
            <person name="Lyne R."/>
            <person name="Martin S."/>
            <person name="Mashreghi-Mohammadi M."/>
            <person name="Matthews L."/>
            <person name="Matthews N.S.W."/>
            <person name="McLaren S."/>
            <person name="Milne S."/>
            <person name="Mistry S."/>
            <person name="Moore M.J.F."/>
            <person name="Nickerson T."/>
            <person name="O'Dell C.N."/>
            <person name="Oliver K."/>
            <person name="Palmeiri A."/>
            <person name="Palmer S.A."/>
            <person name="Parker A."/>
            <person name="Patel D."/>
            <person name="Pearce A.V."/>
            <person name="Peck A.I."/>
            <person name="Pelan S."/>
            <person name="Phelps K."/>
            <person name="Phillimore B.J."/>
            <person name="Plumb R."/>
            <person name="Rajan J."/>
            <person name="Raymond C."/>
            <person name="Rouse G."/>
            <person name="Saenphimmachak C."/>
            <person name="Sehra H.K."/>
            <person name="Sheridan E."/>
            <person name="Shownkeen R."/>
            <person name="Sims S."/>
            <person name="Skuce C.D."/>
            <person name="Smith M."/>
            <person name="Steward C."/>
            <person name="Subramanian S."/>
            <person name="Sycamore N."/>
            <person name="Tracey A."/>
            <person name="Tromans A."/>
            <person name="Van Helmond Z."/>
            <person name="Wall M."/>
            <person name="Wallis J.M."/>
            <person name="White S."/>
            <person name="Whitehead S.L."/>
            <person name="Wilkinson J.E."/>
            <person name="Willey D.L."/>
            <person name="Williams H."/>
            <person name="Wilming L."/>
            <person name="Wray P.W."/>
            <person name="Wu Z."/>
            <person name="Coulson A."/>
            <person name="Vaudin M."/>
            <person name="Sulston J.E."/>
            <person name="Durbin R.M."/>
            <person name="Hubbard T."/>
            <person name="Wooster R."/>
            <person name="Dunham I."/>
            <person name="Carter N.P."/>
            <person name="McVean G."/>
            <person name="Ross M.T."/>
            <person name="Harrow J."/>
            <person name="Olson M.V."/>
            <person name="Beck S."/>
            <person name="Rogers J."/>
            <person name="Bentley D.R."/>
        </authorList>
    </citation>
    <scope>NUCLEOTIDE SEQUENCE [LARGE SCALE GENOMIC DNA]</scope>
</reference>
<reference key="2">
    <citation type="journal article" date="2009" name="Genomics">
        <title>Evidence for potential functionality of nuclearly-encoded humanin isoforms.</title>
        <authorList>
            <person name="Bodzioch M."/>
            <person name="Lapicka-Bodzioch K."/>
            <person name="Zapala B."/>
            <person name="Kamysz W."/>
            <person name="Kiec-Wilk B."/>
            <person name="Dembinska-Kiec A."/>
        </authorList>
    </citation>
    <scope>IDENTIFICATION</scope>
</reference>